<accession>Q5ZS01</accession>
<feature type="chain" id="PRO_0000218202" description="Putative glutamate--cysteine ligase 2">
    <location>
        <begin position="1"/>
        <end position="383"/>
    </location>
</feature>
<gene>
    <name type="ordered locus">lpg2719</name>
</gene>
<evidence type="ECO:0000255" key="1">
    <source>
        <dbReference type="HAMAP-Rule" id="MF_01609"/>
    </source>
</evidence>
<organism>
    <name type="scientific">Legionella pneumophila subsp. pneumophila (strain Philadelphia 1 / ATCC 33152 / DSM 7513)</name>
    <dbReference type="NCBI Taxonomy" id="272624"/>
    <lineage>
        <taxon>Bacteria</taxon>
        <taxon>Pseudomonadati</taxon>
        <taxon>Pseudomonadota</taxon>
        <taxon>Gammaproteobacteria</taxon>
        <taxon>Legionellales</taxon>
        <taxon>Legionellaceae</taxon>
        <taxon>Legionella</taxon>
    </lineage>
</organism>
<keyword id="KW-0067">ATP-binding</keyword>
<keyword id="KW-0436">Ligase</keyword>
<keyword id="KW-0547">Nucleotide-binding</keyword>
<keyword id="KW-1185">Reference proteome</keyword>
<name>GCS2_LEGPH</name>
<comment type="function">
    <text evidence="1">ATP-dependent carboxylate-amine ligase which exhibits weak glutamate--cysteine ligase activity.</text>
</comment>
<comment type="catalytic activity">
    <reaction evidence="1">
        <text>L-cysteine + L-glutamate + ATP = gamma-L-glutamyl-L-cysteine + ADP + phosphate + H(+)</text>
        <dbReference type="Rhea" id="RHEA:13285"/>
        <dbReference type="ChEBI" id="CHEBI:15378"/>
        <dbReference type="ChEBI" id="CHEBI:29985"/>
        <dbReference type="ChEBI" id="CHEBI:30616"/>
        <dbReference type="ChEBI" id="CHEBI:35235"/>
        <dbReference type="ChEBI" id="CHEBI:43474"/>
        <dbReference type="ChEBI" id="CHEBI:58173"/>
        <dbReference type="ChEBI" id="CHEBI:456216"/>
        <dbReference type="EC" id="6.3.2.2"/>
    </reaction>
</comment>
<comment type="similarity">
    <text evidence="1">Belongs to the glutamate--cysteine ligase type 2 family. YbdK subfamily.</text>
</comment>
<protein>
    <recommendedName>
        <fullName evidence="1">Putative glutamate--cysteine ligase 2</fullName>
        <ecNumber evidence="1">6.3.2.2</ecNumber>
    </recommendedName>
    <alternativeName>
        <fullName evidence="1">Gamma-glutamylcysteine synthetase 2</fullName>
        <shortName evidence="1">GCS 2</shortName>
        <shortName evidence="1">Gamma-GCS 2</shortName>
    </alternativeName>
</protein>
<sequence length="383" mass="44668">MRLLSFKKSKIVSIGTELEFQIIDCSSLSLVSRSKELMRALKDMRYRDQIKPEITQSMIEINSSIHQSAKEMYDELLELQKILVETAASIDIAFCGGGTHPFQQWTMQKIFPSKRFKKKFNQYRYLSKRATVFGQHIHIGCPTGDDAIYLTHALARYVPHFIAISASSPFYLGINTNYCSSRSTIFNAFPLSGVIPYLRNWQEFSDYYRKMYRWKIIENMKDFYWDIRPKPELGTIEIRVCDTPLTLRKSILITAYIQALALYLLEEKSVQLSHDLYYVYNYNRFQASRHGLEGELTVTDKDRPIPIMDDILETIKKIEQYINGLGNSEYIEELYSDVINKQNDSVLINKIYKQDGSFSKLVAAQCELWLSDSKDRKWMTQPS</sequence>
<reference key="1">
    <citation type="journal article" date="2004" name="Science">
        <title>The genomic sequence of the accidental pathogen Legionella pneumophila.</title>
        <authorList>
            <person name="Chien M."/>
            <person name="Morozova I."/>
            <person name="Shi S."/>
            <person name="Sheng H."/>
            <person name="Chen J."/>
            <person name="Gomez S.M."/>
            <person name="Asamani G."/>
            <person name="Hill K."/>
            <person name="Nuara J."/>
            <person name="Feder M."/>
            <person name="Rineer J."/>
            <person name="Greenberg J.J."/>
            <person name="Steshenko V."/>
            <person name="Park S.H."/>
            <person name="Zhao B."/>
            <person name="Teplitskaya E."/>
            <person name="Edwards J.R."/>
            <person name="Pampou S."/>
            <person name="Georghiou A."/>
            <person name="Chou I.-C."/>
            <person name="Iannuccilli W."/>
            <person name="Ulz M.E."/>
            <person name="Kim D.H."/>
            <person name="Geringer-Sameth A."/>
            <person name="Goldsberry C."/>
            <person name="Morozov P."/>
            <person name="Fischer S.G."/>
            <person name="Segal G."/>
            <person name="Qu X."/>
            <person name="Rzhetsky A."/>
            <person name="Zhang P."/>
            <person name="Cayanis E."/>
            <person name="De Jong P.J."/>
            <person name="Ju J."/>
            <person name="Kalachikov S."/>
            <person name="Shuman H.A."/>
            <person name="Russo J.J."/>
        </authorList>
    </citation>
    <scope>NUCLEOTIDE SEQUENCE [LARGE SCALE GENOMIC DNA]</scope>
    <source>
        <strain>Philadelphia 1 / ATCC 33152 / DSM 7513</strain>
    </source>
</reference>
<proteinExistence type="inferred from homology"/>
<dbReference type="EC" id="6.3.2.2" evidence="1"/>
<dbReference type="EMBL" id="AE017354">
    <property type="protein sequence ID" value="AAU28776.1"/>
    <property type="molecule type" value="Genomic_DNA"/>
</dbReference>
<dbReference type="RefSeq" id="WP_010948418.1">
    <property type="nucleotide sequence ID" value="NC_002942.5"/>
</dbReference>
<dbReference type="RefSeq" id="YP_096723.1">
    <property type="nucleotide sequence ID" value="NC_002942.5"/>
</dbReference>
<dbReference type="SMR" id="Q5ZS01"/>
<dbReference type="STRING" id="272624.lpg2719"/>
<dbReference type="PaxDb" id="272624-lpg2719"/>
<dbReference type="KEGG" id="lpn:lpg2719"/>
<dbReference type="PATRIC" id="fig|272624.6.peg.2905"/>
<dbReference type="eggNOG" id="COG2170">
    <property type="taxonomic scope" value="Bacteria"/>
</dbReference>
<dbReference type="HOGENOM" id="CLU_044848_1_1_6"/>
<dbReference type="OrthoDB" id="9769628at2"/>
<dbReference type="Proteomes" id="UP000000609">
    <property type="component" value="Chromosome"/>
</dbReference>
<dbReference type="GO" id="GO:0005524">
    <property type="term" value="F:ATP binding"/>
    <property type="evidence" value="ECO:0007669"/>
    <property type="project" value="UniProtKB-KW"/>
</dbReference>
<dbReference type="GO" id="GO:0004357">
    <property type="term" value="F:glutamate-cysteine ligase activity"/>
    <property type="evidence" value="ECO:0007669"/>
    <property type="project" value="UniProtKB-EC"/>
</dbReference>
<dbReference type="GO" id="GO:0042398">
    <property type="term" value="P:modified amino acid biosynthetic process"/>
    <property type="evidence" value="ECO:0007669"/>
    <property type="project" value="InterPro"/>
</dbReference>
<dbReference type="Gene3D" id="3.30.590.20">
    <property type="match status" value="1"/>
</dbReference>
<dbReference type="HAMAP" id="MF_01609">
    <property type="entry name" value="Glu_cys_ligase_2"/>
    <property type="match status" value="1"/>
</dbReference>
<dbReference type="InterPro" id="IPR050141">
    <property type="entry name" value="GCL_type2/YbdK_subfam"/>
</dbReference>
<dbReference type="InterPro" id="IPR006336">
    <property type="entry name" value="GCS2"/>
</dbReference>
<dbReference type="InterPro" id="IPR014746">
    <property type="entry name" value="Gln_synth/guanido_kin_cat_dom"/>
</dbReference>
<dbReference type="InterPro" id="IPR011793">
    <property type="entry name" value="YbdK"/>
</dbReference>
<dbReference type="NCBIfam" id="TIGR02050">
    <property type="entry name" value="gshA_cyan_rel"/>
    <property type="match status" value="1"/>
</dbReference>
<dbReference type="NCBIfam" id="NF010040">
    <property type="entry name" value="PRK13516.1"/>
    <property type="match status" value="1"/>
</dbReference>
<dbReference type="PANTHER" id="PTHR36510">
    <property type="entry name" value="GLUTAMATE--CYSTEINE LIGASE 2-RELATED"/>
    <property type="match status" value="1"/>
</dbReference>
<dbReference type="PANTHER" id="PTHR36510:SF1">
    <property type="entry name" value="GLUTAMATE--CYSTEINE LIGASE 2-RELATED"/>
    <property type="match status" value="1"/>
</dbReference>
<dbReference type="Pfam" id="PF04107">
    <property type="entry name" value="GCS2"/>
    <property type="match status" value="1"/>
</dbReference>
<dbReference type="SUPFAM" id="SSF55931">
    <property type="entry name" value="Glutamine synthetase/guanido kinase"/>
    <property type="match status" value="1"/>
</dbReference>